<accession>A0Q119</accession>
<protein>
    <recommendedName>
        <fullName evidence="1">DNA-directed RNA polymerase subunit omega</fullName>
        <shortName evidence="1">RNAP omega subunit</shortName>
        <ecNumber evidence="1">2.7.7.6</ecNumber>
    </recommendedName>
    <alternativeName>
        <fullName evidence="1">RNA polymerase omega subunit</fullName>
    </alternativeName>
    <alternativeName>
        <fullName evidence="1">Transcriptase subunit omega</fullName>
    </alternativeName>
</protein>
<organism>
    <name type="scientific">Clostridium novyi (strain NT)</name>
    <dbReference type="NCBI Taxonomy" id="386415"/>
    <lineage>
        <taxon>Bacteria</taxon>
        <taxon>Bacillati</taxon>
        <taxon>Bacillota</taxon>
        <taxon>Clostridia</taxon>
        <taxon>Eubacteriales</taxon>
        <taxon>Clostridiaceae</taxon>
        <taxon>Clostridium</taxon>
    </lineage>
</organism>
<feature type="chain" id="PRO_1000005915" description="DNA-directed RNA polymerase subunit omega">
    <location>
        <begin position="1"/>
        <end position="73"/>
    </location>
</feature>
<evidence type="ECO:0000255" key="1">
    <source>
        <dbReference type="HAMAP-Rule" id="MF_00366"/>
    </source>
</evidence>
<sequence>MNNYMINPSIVDLLTKVDNRYSLVTVTSRRARQIIDGDEALVNVEDAYKPLTTAIHEVNAGKVSYESLVEGIK</sequence>
<gene>
    <name evidence="1" type="primary">rpoZ</name>
    <name type="ordered locus">NT01CX_2248</name>
</gene>
<reference key="1">
    <citation type="journal article" date="2006" name="Nat. Biotechnol.">
        <title>The genome and transcriptomes of the anti-tumor agent Clostridium novyi-NT.</title>
        <authorList>
            <person name="Bettegowda C."/>
            <person name="Huang X."/>
            <person name="Lin J."/>
            <person name="Cheong I."/>
            <person name="Kohli M."/>
            <person name="Szabo S.A."/>
            <person name="Zhang X."/>
            <person name="Diaz L.A. Jr."/>
            <person name="Velculescu V.E."/>
            <person name="Parmigiani G."/>
            <person name="Kinzler K.W."/>
            <person name="Vogelstein B."/>
            <person name="Zhou S."/>
        </authorList>
    </citation>
    <scope>NUCLEOTIDE SEQUENCE [LARGE SCALE GENOMIC DNA]</scope>
    <source>
        <strain>NT</strain>
    </source>
</reference>
<dbReference type="EC" id="2.7.7.6" evidence="1"/>
<dbReference type="EMBL" id="CP000382">
    <property type="protein sequence ID" value="ABK60866.1"/>
    <property type="molecule type" value="Genomic_DNA"/>
</dbReference>
<dbReference type="RefSeq" id="WP_011722318.1">
    <property type="nucleotide sequence ID" value="NC_008593.1"/>
</dbReference>
<dbReference type="SMR" id="A0Q119"/>
<dbReference type="STRING" id="386415.NT01CX_2248"/>
<dbReference type="KEGG" id="cno:NT01CX_2248"/>
<dbReference type="eggNOG" id="COG1758">
    <property type="taxonomic scope" value="Bacteria"/>
</dbReference>
<dbReference type="HOGENOM" id="CLU_125406_6_1_9"/>
<dbReference type="Proteomes" id="UP000008220">
    <property type="component" value="Chromosome"/>
</dbReference>
<dbReference type="GO" id="GO:0000428">
    <property type="term" value="C:DNA-directed RNA polymerase complex"/>
    <property type="evidence" value="ECO:0007669"/>
    <property type="project" value="UniProtKB-KW"/>
</dbReference>
<dbReference type="GO" id="GO:0003677">
    <property type="term" value="F:DNA binding"/>
    <property type="evidence" value="ECO:0007669"/>
    <property type="project" value="UniProtKB-UniRule"/>
</dbReference>
<dbReference type="GO" id="GO:0003899">
    <property type="term" value="F:DNA-directed RNA polymerase activity"/>
    <property type="evidence" value="ECO:0007669"/>
    <property type="project" value="UniProtKB-UniRule"/>
</dbReference>
<dbReference type="GO" id="GO:0006351">
    <property type="term" value="P:DNA-templated transcription"/>
    <property type="evidence" value="ECO:0007669"/>
    <property type="project" value="UniProtKB-UniRule"/>
</dbReference>
<dbReference type="Gene3D" id="3.90.940.10">
    <property type="match status" value="1"/>
</dbReference>
<dbReference type="HAMAP" id="MF_00366">
    <property type="entry name" value="RNApol_bact_RpoZ"/>
    <property type="match status" value="1"/>
</dbReference>
<dbReference type="InterPro" id="IPR003716">
    <property type="entry name" value="DNA-dir_RNA_pol_omega"/>
</dbReference>
<dbReference type="InterPro" id="IPR006110">
    <property type="entry name" value="Pol_omega/Rpo6/RPB6"/>
</dbReference>
<dbReference type="InterPro" id="IPR036161">
    <property type="entry name" value="RPB6/omega-like_sf"/>
</dbReference>
<dbReference type="NCBIfam" id="TIGR00690">
    <property type="entry name" value="rpoZ"/>
    <property type="match status" value="1"/>
</dbReference>
<dbReference type="PANTHER" id="PTHR34476">
    <property type="entry name" value="DNA-DIRECTED RNA POLYMERASE SUBUNIT OMEGA"/>
    <property type="match status" value="1"/>
</dbReference>
<dbReference type="PANTHER" id="PTHR34476:SF1">
    <property type="entry name" value="DNA-DIRECTED RNA POLYMERASE SUBUNIT OMEGA"/>
    <property type="match status" value="1"/>
</dbReference>
<dbReference type="Pfam" id="PF01192">
    <property type="entry name" value="RNA_pol_Rpb6"/>
    <property type="match status" value="1"/>
</dbReference>
<dbReference type="SMART" id="SM01409">
    <property type="entry name" value="RNA_pol_Rpb6"/>
    <property type="match status" value="1"/>
</dbReference>
<dbReference type="SUPFAM" id="SSF63562">
    <property type="entry name" value="RPB6/omega subunit-like"/>
    <property type="match status" value="1"/>
</dbReference>
<keyword id="KW-0240">DNA-directed RNA polymerase</keyword>
<keyword id="KW-0548">Nucleotidyltransferase</keyword>
<keyword id="KW-1185">Reference proteome</keyword>
<keyword id="KW-0804">Transcription</keyword>
<keyword id="KW-0808">Transferase</keyword>
<name>RPOZ_CLONN</name>
<comment type="function">
    <text evidence="1">Promotes RNA polymerase assembly. Latches the N- and C-terminal regions of the beta' subunit thereby facilitating its interaction with the beta and alpha subunits.</text>
</comment>
<comment type="catalytic activity">
    <reaction evidence="1">
        <text>RNA(n) + a ribonucleoside 5'-triphosphate = RNA(n+1) + diphosphate</text>
        <dbReference type="Rhea" id="RHEA:21248"/>
        <dbReference type="Rhea" id="RHEA-COMP:14527"/>
        <dbReference type="Rhea" id="RHEA-COMP:17342"/>
        <dbReference type="ChEBI" id="CHEBI:33019"/>
        <dbReference type="ChEBI" id="CHEBI:61557"/>
        <dbReference type="ChEBI" id="CHEBI:140395"/>
        <dbReference type="EC" id="2.7.7.6"/>
    </reaction>
</comment>
<comment type="subunit">
    <text evidence="1">The RNAP catalytic core consists of 2 alpha, 1 beta, 1 beta' and 1 omega subunit. When a sigma factor is associated with the core the holoenzyme is formed, which can initiate transcription.</text>
</comment>
<comment type="similarity">
    <text evidence="1">Belongs to the RNA polymerase subunit omega family.</text>
</comment>
<proteinExistence type="inferred from homology"/>